<proteinExistence type="evidence at transcript level"/>
<comment type="function">
    <text evidence="1">Acts as a component of the translation initiation factor 2B (eIF2B) complex, which catalyzes the exchange of GDP for GTP on eukaryotic initiation factor 2 (eIF2) gamma subunit. Its guanine nucleotide exchange factor activity is repressed when bound to eIF2 complex phosphorylated on the alpha subunit, thereby limiting the amount of methionyl-initiator methionine tRNA available to the ribosome and consequently global translation is repressed.</text>
</comment>
<comment type="activity regulation">
    <text evidence="1">Activated by the chemical integrated stress response (ISR) inhibitor ISRIB which stimulates guanine nucleotide exchange factor activity for both phosphorylated and unphosphorylated eIF2.</text>
</comment>
<comment type="subunit">
    <text evidence="1">Component of the translation initiation factor 2B (eIF2B) complex which is a heterodecamer of two sets of five different subunits: alpha, beta, gamma, delta and epsilon. Subunits alpha, beta and delta comprise a regulatory subcomplex and subunits epsilon and gamma comprise a catalytic subcomplex. Within the complex, the hexameric regulatory complex resides at the center, with the two heterodimeric catalytic subcomplexes bound on opposite sides.</text>
</comment>
<comment type="subcellular location">
    <subcellularLocation>
        <location evidence="2">Cytoplasm</location>
        <location evidence="2">Cytosol</location>
    </subcellularLocation>
</comment>
<comment type="similarity">
    <text evidence="3">Belongs to the eIF-2B alpha/beta/delta subunits family.</text>
</comment>
<reference key="1">
    <citation type="journal article" date="1996" name="Biochem. J.">
        <title>eIF2B, the guanine nucleotide-exchange factor for eukaryotic initiation factor 2. Sequence conservation between the alpha, beta and delta subunits of eIF2B from mammals and yeast.</title>
        <authorList>
            <person name="Price N.T."/>
            <person name="Mellor H."/>
            <person name="Craddock B.L."/>
            <person name="Flowers K.M."/>
            <person name="Kimball S.R."/>
            <person name="Wilmer T."/>
            <person name="Jefferson L.S."/>
            <person name="Proud C.G."/>
        </authorList>
    </citation>
    <scope>NUCLEOTIDE SEQUENCE [MRNA]</scope>
    <source>
        <strain>Sprague-Dawley</strain>
    </source>
</reference>
<reference key="2">
    <citation type="journal article" date="1997" name="J. Biol. Chem.">
        <title>Subunit assembly and guanine nucleotide exchange activity of eukaryotic initiation factor-2B expressed in Sf9 cells.</title>
        <authorList>
            <person name="Fabian J.R."/>
            <person name="Kimball S.R."/>
            <person name="Heinzinger N.K."/>
            <person name="Jefferson L.S."/>
        </authorList>
    </citation>
    <scope>NUCLEOTIDE SEQUENCE [MRNA]</scope>
    <source>
        <strain>Sprague-Dawley</strain>
        <tissue>Brain</tissue>
    </source>
</reference>
<evidence type="ECO:0000250" key="1">
    <source>
        <dbReference type="UniProtKB" id="P49770"/>
    </source>
</evidence>
<evidence type="ECO:0000250" key="2">
    <source>
        <dbReference type="UniProtKB" id="Q9UT76"/>
    </source>
</evidence>
<evidence type="ECO:0000305" key="3"/>
<feature type="chain" id="PRO_0000156064" description="Translation initiation factor eIF2B subunit beta">
    <location>
        <begin position="1"/>
        <end position="351"/>
    </location>
</feature>
<feature type="sequence conflict" description="In Ref. 2; AAB58527." evidence="3" ref="2">
    <original>T</original>
    <variation>S</variation>
    <location>
        <position position="30"/>
    </location>
</feature>
<feature type="sequence conflict" description="In Ref. 2; AAB58527." evidence="3" ref="2">
    <original>HPP</original>
    <variation>QPS</variation>
    <location>
        <begin position="72"/>
        <end position="74"/>
    </location>
</feature>
<feature type="sequence conflict" description="In Ref. 2; AAB58527." evidence="3" ref="2">
    <location>
        <begin position="93"/>
        <end position="95"/>
    </location>
</feature>
<dbReference type="EMBL" id="U31880">
    <property type="protein sequence ID" value="AAB38753.1"/>
    <property type="molecule type" value="mRNA"/>
</dbReference>
<dbReference type="EMBL" id="U83914">
    <property type="protein sequence ID" value="AAB58527.1"/>
    <property type="molecule type" value="mRNA"/>
</dbReference>
<dbReference type="PIR" id="S71960">
    <property type="entry name" value="S71960"/>
</dbReference>
<dbReference type="SMR" id="Q62818"/>
<dbReference type="FunCoup" id="Q62818">
    <property type="interactions" value="2048"/>
</dbReference>
<dbReference type="STRING" id="10116.ENSRNOP00000008730"/>
<dbReference type="iPTMnet" id="Q62818"/>
<dbReference type="PhosphoSitePlus" id="Q62818"/>
<dbReference type="jPOST" id="Q62818"/>
<dbReference type="PaxDb" id="10116-ENSRNOP00000008730"/>
<dbReference type="UCSC" id="RGD:620820">
    <property type="organism name" value="rat"/>
</dbReference>
<dbReference type="AGR" id="RGD:620820"/>
<dbReference type="RGD" id="620820">
    <property type="gene designation" value="Eif2b2"/>
</dbReference>
<dbReference type="eggNOG" id="KOG1465">
    <property type="taxonomic scope" value="Eukaryota"/>
</dbReference>
<dbReference type="InParanoid" id="Q62818"/>
<dbReference type="PhylomeDB" id="Q62818"/>
<dbReference type="Reactome" id="R-RNO-72731">
    <property type="pathway name" value="Recycling of eIF2:GDP"/>
</dbReference>
<dbReference type="PRO" id="PR:Q62818"/>
<dbReference type="Proteomes" id="UP000002494">
    <property type="component" value="Unplaced"/>
</dbReference>
<dbReference type="GO" id="GO:0030424">
    <property type="term" value="C:axon"/>
    <property type="evidence" value="ECO:0000314"/>
    <property type="project" value="RGD"/>
</dbReference>
<dbReference type="GO" id="GO:0005737">
    <property type="term" value="C:cytoplasm"/>
    <property type="evidence" value="ECO:0000250"/>
    <property type="project" value="UniProtKB"/>
</dbReference>
<dbReference type="GO" id="GO:0005829">
    <property type="term" value="C:cytosol"/>
    <property type="evidence" value="ECO:0007669"/>
    <property type="project" value="UniProtKB-SubCell"/>
</dbReference>
<dbReference type="GO" id="GO:0005783">
    <property type="term" value="C:endoplasmic reticulum"/>
    <property type="evidence" value="ECO:0000314"/>
    <property type="project" value="SynGO"/>
</dbReference>
<dbReference type="GO" id="GO:0005851">
    <property type="term" value="C:eukaryotic translation initiation factor 2B complex"/>
    <property type="evidence" value="ECO:0000314"/>
    <property type="project" value="RGD"/>
</dbReference>
<dbReference type="GO" id="GO:0098690">
    <property type="term" value="C:glycinergic synapse"/>
    <property type="evidence" value="ECO:0000314"/>
    <property type="project" value="SynGO"/>
</dbReference>
<dbReference type="GO" id="GO:0098794">
    <property type="term" value="C:postsynapse"/>
    <property type="evidence" value="ECO:0000314"/>
    <property type="project" value="SynGO"/>
</dbReference>
<dbReference type="GO" id="GO:0005524">
    <property type="term" value="F:ATP binding"/>
    <property type="evidence" value="ECO:0000250"/>
    <property type="project" value="UniProtKB"/>
</dbReference>
<dbReference type="GO" id="GO:0005525">
    <property type="term" value="F:GTP binding"/>
    <property type="evidence" value="ECO:0000250"/>
    <property type="project" value="UniProtKB"/>
</dbReference>
<dbReference type="GO" id="GO:0005085">
    <property type="term" value="F:guanyl-nucleotide exchange factor activity"/>
    <property type="evidence" value="ECO:0000266"/>
    <property type="project" value="RGD"/>
</dbReference>
<dbReference type="GO" id="GO:0003743">
    <property type="term" value="F:translation initiation factor activity"/>
    <property type="evidence" value="ECO:0000318"/>
    <property type="project" value="GO_Central"/>
</dbReference>
<dbReference type="GO" id="GO:0007417">
    <property type="term" value="P:central nervous system development"/>
    <property type="evidence" value="ECO:0000250"/>
    <property type="project" value="UniProtKB"/>
</dbReference>
<dbReference type="GO" id="GO:0002183">
    <property type="term" value="P:cytoplasmic translational initiation"/>
    <property type="evidence" value="ECO:0000250"/>
    <property type="project" value="UniProtKB"/>
</dbReference>
<dbReference type="GO" id="GO:0021766">
    <property type="term" value="P:hippocampus development"/>
    <property type="evidence" value="ECO:0000270"/>
    <property type="project" value="RGD"/>
</dbReference>
<dbReference type="GO" id="GO:0042552">
    <property type="term" value="P:myelination"/>
    <property type="evidence" value="ECO:0000250"/>
    <property type="project" value="UniProtKB"/>
</dbReference>
<dbReference type="GO" id="GO:0014003">
    <property type="term" value="P:oligodendrocyte development"/>
    <property type="evidence" value="ECO:0000250"/>
    <property type="project" value="UniProtKB"/>
</dbReference>
<dbReference type="GO" id="GO:0001541">
    <property type="term" value="P:ovarian follicle development"/>
    <property type="evidence" value="ECO:0000250"/>
    <property type="project" value="UniProtKB"/>
</dbReference>
<dbReference type="GO" id="GO:0045773">
    <property type="term" value="P:positive regulation of axon extension"/>
    <property type="evidence" value="ECO:0000315"/>
    <property type="project" value="RGD"/>
</dbReference>
<dbReference type="GO" id="GO:0009749">
    <property type="term" value="P:response to glucose"/>
    <property type="evidence" value="ECO:0000314"/>
    <property type="project" value="UniProtKB"/>
</dbReference>
<dbReference type="GO" id="GO:0009408">
    <property type="term" value="P:response to heat"/>
    <property type="evidence" value="ECO:0000314"/>
    <property type="project" value="UniProtKB"/>
</dbReference>
<dbReference type="GO" id="GO:0043434">
    <property type="term" value="P:response to peptide hormone"/>
    <property type="evidence" value="ECO:0000314"/>
    <property type="project" value="UniProtKB"/>
</dbReference>
<dbReference type="GO" id="GO:0050852">
    <property type="term" value="P:T cell receptor signaling pathway"/>
    <property type="evidence" value="ECO:0000250"/>
    <property type="project" value="UniProtKB"/>
</dbReference>
<dbReference type="GO" id="GO:0006413">
    <property type="term" value="P:translational initiation"/>
    <property type="evidence" value="ECO:0000250"/>
    <property type="project" value="UniProtKB"/>
</dbReference>
<dbReference type="FunFam" id="3.40.50.10470:FF:000004">
    <property type="entry name" value="Translation initiation factor eIF-2B subunit beta"/>
    <property type="match status" value="1"/>
</dbReference>
<dbReference type="Gene3D" id="3.40.50.10470">
    <property type="entry name" value="Translation initiation factor eif-2b, domain 2"/>
    <property type="match status" value="1"/>
</dbReference>
<dbReference type="InterPro" id="IPR051855">
    <property type="entry name" value="eIF2B_beta_subunit"/>
</dbReference>
<dbReference type="InterPro" id="IPR000649">
    <property type="entry name" value="IF-2B-related"/>
</dbReference>
<dbReference type="InterPro" id="IPR042529">
    <property type="entry name" value="IF_2B-like_C"/>
</dbReference>
<dbReference type="InterPro" id="IPR037171">
    <property type="entry name" value="NagB/RpiA_transferase-like"/>
</dbReference>
<dbReference type="PANTHER" id="PTHR45859">
    <property type="entry name" value="TRANSLATION INITIATION FACTOR EIF-2B SUBUNIT BETA"/>
    <property type="match status" value="1"/>
</dbReference>
<dbReference type="PANTHER" id="PTHR45859:SF1">
    <property type="entry name" value="TRANSLATION INITIATION FACTOR EIF-2B SUBUNIT BETA"/>
    <property type="match status" value="1"/>
</dbReference>
<dbReference type="Pfam" id="PF01008">
    <property type="entry name" value="IF-2B"/>
    <property type="match status" value="1"/>
</dbReference>
<dbReference type="SUPFAM" id="SSF100950">
    <property type="entry name" value="NagB/RpiA/CoA transferase-like"/>
    <property type="match status" value="1"/>
</dbReference>
<gene>
    <name type="primary">Eif2b2</name>
    <name type="synonym">Eif2bb</name>
</gene>
<keyword id="KW-0963">Cytoplasm</keyword>
<keyword id="KW-0396">Initiation factor</keyword>
<keyword id="KW-0648">Protein biosynthesis</keyword>
<keyword id="KW-1185">Reference proteome</keyword>
<name>EI2BB_RAT</name>
<sequence length="351" mass="38875">MPGAAAKGSELSERIESFVETLKRGGGRRTSEDMARETLGLLRRLITDHHWNNAGDLMDLIRREGRRMTAAHPPETTVGNMVRRVLKIIREEYGRLHGRSDESDQQESLHKLLTSGGLSEDFSFHYAPLKSNIIEAINELLVELEGTTENIAAQALEHIHSNEVIMTIGFSRTVEAFLREAAQKRKFHVIAAECAPFCQGHEMAVNLSEAGIETTVMTDAAIFAVMSRVNKVIIGTKTILANGSLRAVAGTHTLALAAKHHSTPLIVCAPMFKLSPQFPSEEDSFHKFVAPEEVLPFTEGDILEKVSVHCPVFDYVPPDLITLFISNIGGNAPSYVYRLMSELYHPDDHVL</sequence>
<organism>
    <name type="scientific">Rattus norvegicus</name>
    <name type="common">Rat</name>
    <dbReference type="NCBI Taxonomy" id="10116"/>
    <lineage>
        <taxon>Eukaryota</taxon>
        <taxon>Metazoa</taxon>
        <taxon>Chordata</taxon>
        <taxon>Craniata</taxon>
        <taxon>Vertebrata</taxon>
        <taxon>Euteleostomi</taxon>
        <taxon>Mammalia</taxon>
        <taxon>Eutheria</taxon>
        <taxon>Euarchontoglires</taxon>
        <taxon>Glires</taxon>
        <taxon>Rodentia</taxon>
        <taxon>Myomorpha</taxon>
        <taxon>Muroidea</taxon>
        <taxon>Muridae</taxon>
        <taxon>Murinae</taxon>
        <taxon>Rattus</taxon>
    </lineage>
</organism>
<protein>
    <recommendedName>
        <fullName>Translation initiation factor eIF2B subunit beta</fullName>
    </recommendedName>
    <alternativeName>
        <fullName>eIF2B GDP-GTP exchange factor subunit beta</fullName>
    </alternativeName>
</protein>
<accession>Q62818</accession>
<accession>O08956</accession>